<evidence type="ECO:0000255" key="1">
    <source>
        <dbReference type="HAMAP-Rule" id="MF_01510"/>
    </source>
</evidence>
<proteinExistence type="inferred from homology"/>
<protein>
    <recommendedName>
        <fullName evidence="1">GMP synthase [glutamine-hydrolyzing] subunit A</fullName>
        <ecNumber evidence="1">6.3.5.2</ecNumber>
    </recommendedName>
    <alternativeName>
        <fullName evidence="1">Glutamine amidotransferase</fullName>
    </alternativeName>
</protein>
<name>GUAAA_PYRFU</name>
<feature type="chain" id="PRO_0000140229" description="GMP synthase [glutamine-hydrolyzing] subunit A">
    <location>
        <begin position="1"/>
        <end position="188"/>
    </location>
</feature>
<feature type="domain" description="Glutamine amidotransferase type-1" evidence="1">
    <location>
        <begin position="1"/>
        <end position="188"/>
    </location>
</feature>
<feature type="active site" description="Nucleophile" evidence="1">
    <location>
        <position position="78"/>
    </location>
</feature>
<feature type="active site" evidence="1">
    <location>
        <position position="165"/>
    </location>
</feature>
<feature type="active site" evidence="1">
    <location>
        <position position="167"/>
    </location>
</feature>
<comment type="function">
    <text evidence="1">Catalyzes the synthesis of GMP from XMP.</text>
</comment>
<comment type="catalytic activity">
    <reaction evidence="1">
        <text>XMP + L-glutamine + ATP + H2O = GMP + L-glutamate + AMP + diphosphate + 2 H(+)</text>
        <dbReference type="Rhea" id="RHEA:11680"/>
        <dbReference type="ChEBI" id="CHEBI:15377"/>
        <dbReference type="ChEBI" id="CHEBI:15378"/>
        <dbReference type="ChEBI" id="CHEBI:29985"/>
        <dbReference type="ChEBI" id="CHEBI:30616"/>
        <dbReference type="ChEBI" id="CHEBI:33019"/>
        <dbReference type="ChEBI" id="CHEBI:57464"/>
        <dbReference type="ChEBI" id="CHEBI:58115"/>
        <dbReference type="ChEBI" id="CHEBI:58359"/>
        <dbReference type="ChEBI" id="CHEBI:456215"/>
        <dbReference type="EC" id="6.3.5.2"/>
    </reaction>
</comment>
<comment type="pathway">
    <text evidence="1">Purine metabolism; GMP biosynthesis; GMP from XMP (L-Gln route): step 1/1.</text>
</comment>
<comment type="subunit">
    <text evidence="1">Heterodimer composed of a glutamine amidotransferase subunit (A) and a GMP-binding subunit (B).</text>
</comment>
<organism>
    <name type="scientific">Pyrococcus furiosus (strain ATCC 43587 / DSM 3638 / JCM 8422 / Vc1)</name>
    <dbReference type="NCBI Taxonomy" id="186497"/>
    <lineage>
        <taxon>Archaea</taxon>
        <taxon>Methanobacteriati</taxon>
        <taxon>Methanobacteriota</taxon>
        <taxon>Thermococci</taxon>
        <taxon>Thermococcales</taxon>
        <taxon>Thermococcaceae</taxon>
        <taxon>Pyrococcus</taxon>
    </lineage>
</organism>
<gene>
    <name evidence="1" type="primary">guaAA</name>
    <name type="ordered locus">PF1515</name>
</gene>
<accession>Q8U0R9</accession>
<dbReference type="EC" id="6.3.5.2" evidence="1"/>
<dbReference type="EMBL" id="AE009950">
    <property type="protein sequence ID" value="AAL81639.1"/>
    <property type="molecule type" value="Genomic_DNA"/>
</dbReference>
<dbReference type="RefSeq" id="WP_011012662.1">
    <property type="nucleotide sequence ID" value="NZ_CP023154.1"/>
</dbReference>
<dbReference type="SMR" id="Q8U0R9"/>
<dbReference type="STRING" id="186497.PF1515"/>
<dbReference type="MEROPS" id="C26.A31"/>
<dbReference type="PaxDb" id="186497-PF1515"/>
<dbReference type="KEGG" id="pfu:PF1515"/>
<dbReference type="PATRIC" id="fig|186497.12.peg.1578"/>
<dbReference type="eggNOG" id="arCOG00087">
    <property type="taxonomic scope" value="Archaea"/>
</dbReference>
<dbReference type="HOGENOM" id="CLU_014340_1_4_2"/>
<dbReference type="OrthoDB" id="10772at2157"/>
<dbReference type="PhylomeDB" id="Q8U0R9"/>
<dbReference type="UniPathway" id="UPA00189">
    <property type="reaction ID" value="UER00296"/>
</dbReference>
<dbReference type="Proteomes" id="UP000001013">
    <property type="component" value="Chromosome"/>
</dbReference>
<dbReference type="GO" id="GO:0005829">
    <property type="term" value="C:cytosol"/>
    <property type="evidence" value="ECO:0007669"/>
    <property type="project" value="TreeGrafter"/>
</dbReference>
<dbReference type="GO" id="GO:0005524">
    <property type="term" value="F:ATP binding"/>
    <property type="evidence" value="ECO:0007669"/>
    <property type="project" value="UniProtKB-KW"/>
</dbReference>
<dbReference type="GO" id="GO:0003921">
    <property type="term" value="F:GMP synthase activity"/>
    <property type="evidence" value="ECO:0007669"/>
    <property type="project" value="TreeGrafter"/>
</dbReference>
<dbReference type="CDD" id="cd01742">
    <property type="entry name" value="GATase1_GMP_Synthase"/>
    <property type="match status" value="1"/>
</dbReference>
<dbReference type="FunFam" id="3.40.50.880:FF:000047">
    <property type="entry name" value="GMP synthase [glutamine-hydrolyzing] subunit A"/>
    <property type="match status" value="1"/>
</dbReference>
<dbReference type="Gene3D" id="3.40.50.880">
    <property type="match status" value="1"/>
</dbReference>
<dbReference type="HAMAP" id="MF_01510">
    <property type="entry name" value="GMP_synthase_A"/>
    <property type="match status" value="1"/>
</dbReference>
<dbReference type="InterPro" id="IPR029062">
    <property type="entry name" value="Class_I_gatase-like"/>
</dbReference>
<dbReference type="InterPro" id="IPR017926">
    <property type="entry name" value="GATASE"/>
</dbReference>
<dbReference type="InterPro" id="IPR004739">
    <property type="entry name" value="GMP_synth_GATase"/>
</dbReference>
<dbReference type="InterPro" id="IPR023686">
    <property type="entry name" value="GMP_synthase_A"/>
</dbReference>
<dbReference type="NCBIfam" id="TIGR00888">
    <property type="entry name" value="guaA_Nterm"/>
    <property type="match status" value="1"/>
</dbReference>
<dbReference type="NCBIfam" id="NF001975">
    <property type="entry name" value="PRK00758.1"/>
    <property type="match status" value="1"/>
</dbReference>
<dbReference type="PANTHER" id="PTHR11922:SF2">
    <property type="entry name" value="GMP SYNTHASE [GLUTAMINE-HYDROLYZING]"/>
    <property type="match status" value="1"/>
</dbReference>
<dbReference type="PANTHER" id="PTHR11922">
    <property type="entry name" value="GMP SYNTHASE-RELATED"/>
    <property type="match status" value="1"/>
</dbReference>
<dbReference type="Pfam" id="PF00117">
    <property type="entry name" value="GATase"/>
    <property type="match status" value="1"/>
</dbReference>
<dbReference type="PRINTS" id="PR00097">
    <property type="entry name" value="ANTSNTHASEII"/>
</dbReference>
<dbReference type="PRINTS" id="PR00099">
    <property type="entry name" value="CPSGATASE"/>
</dbReference>
<dbReference type="PRINTS" id="PR00096">
    <property type="entry name" value="GATASE"/>
</dbReference>
<dbReference type="SUPFAM" id="SSF52317">
    <property type="entry name" value="Class I glutamine amidotransferase-like"/>
    <property type="match status" value="1"/>
</dbReference>
<dbReference type="PROSITE" id="PS51273">
    <property type="entry name" value="GATASE_TYPE_1"/>
    <property type="match status" value="1"/>
</dbReference>
<sequence>MIIIMDNGGQYVHRIWRTLRYLGVEAKIIPNTTPLDEIKAMKPKGIIFSGGPSLENTGNCEKILEHYEEFNVPILGICLGHQLIAKFFGGEVGRGEKAEYSLVEIEIIDENDIFKGLPRKVRVWESHMDEVKKLPPKFKLLARSDTCPVEAMKHEELPIYGVQFHPEVAHTEHGADILRNFAKICGEL</sequence>
<reference key="1">
    <citation type="journal article" date="1999" name="Genetics">
        <title>Divergence of the hyperthermophilic archaea Pyrococcus furiosus and P. horikoshii inferred from complete genomic sequences.</title>
        <authorList>
            <person name="Maeder D.L."/>
            <person name="Weiss R.B."/>
            <person name="Dunn D.M."/>
            <person name="Cherry J.L."/>
            <person name="Gonzalez J.M."/>
            <person name="DiRuggiero J."/>
            <person name="Robb F.T."/>
        </authorList>
    </citation>
    <scope>NUCLEOTIDE SEQUENCE [LARGE SCALE GENOMIC DNA]</scope>
    <source>
        <strain>ATCC 43587 / DSM 3638 / JCM 8422 / Vc1</strain>
    </source>
</reference>
<keyword id="KW-0067">ATP-binding</keyword>
<keyword id="KW-0315">Glutamine amidotransferase</keyword>
<keyword id="KW-0332">GMP biosynthesis</keyword>
<keyword id="KW-0436">Ligase</keyword>
<keyword id="KW-0547">Nucleotide-binding</keyword>
<keyword id="KW-0658">Purine biosynthesis</keyword>
<keyword id="KW-1185">Reference proteome</keyword>